<gene>
    <name type="primary">GUCA1A</name>
    <name type="synonym">GCAP1</name>
</gene>
<protein>
    <recommendedName>
        <fullName>Guanylyl cyclase-activating protein 1</fullName>
        <shortName>GCAP 1</shortName>
    </recommendedName>
    <alternativeName>
        <fullName>Guanylate cyclase activator 1A</fullName>
    </alternativeName>
</protein>
<accession>P79880</accession>
<dbReference type="EMBL" id="S82199">
    <property type="protein sequence ID" value="AAB47111.1"/>
    <property type="molecule type" value="mRNA"/>
</dbReference>
<dbReference type="EMBL" id="AF172707">
    <property type="protein sequence ID" value="AAD47879.1"/>
    <property type="molecule type" value="Genomic_DNA"/>
</dbReference>
<dbReference type="PIR" id="S68838">
    <property type="entry name" value="S68838"/>
</dbReference>
<dbReference type="RefSeq" id="NP_989651.1">
    <property type="nucleotide sequence ID" value="NM_204320.4"/>
</dbReference>
<dbReference type="PDB" id="2R2I">
    <property type="method" value="X-ray"/>
    <property type="resolution" value="2.00 A"/>
    <property type="chains" value="A=2-199"/>
</dbReference>
<dbReference type="PDBsum" id="2R2I"/>
<dbReference type="SMR" id="P79880"/>
<dbReference type="FunCoup" id="P79880">
    <property type="interactions" value="14"/>
</dbReference>
<dbReference type="STRING" id="9031.ENSGALP00000002177"/>
<dbReference type="iPTMnet" id="P79880"/>
<dbReference type="PaxDb" id="9031-ENSGALP00000028327"/>
<dbReference type="Ensembl" id="ENSGALT00010066692.1">
    <property type="protein sequence ID" value="ENSGALP00010040833.1"/>
    <property type="gene ID" value="ENSGALG00010027535.1"/>
</dbReference>
<dbReference type="GeneID" id="374216"/>
<dbReference type="KEGG" id="gga:374216"/>
<dbReference type="CTD" id="2978"/>
<dbReference type="VEuPathDB" id="HostDB:geneid_374216"/>
<dbReference type="eggNOG" id="KOG0044">
    <property type="taxonomic scope" value="Eukaryota"/>
</dbReference>
<dbReference type="GeneTree" id="ENSGT00940000160607"/>
<dbReference type="HOGENOM" id="CLU_072366_4_1_1"/>
<dbReference type="InParanoid" id="P79880"/>
<dbReference type="OMA" id="IRTINPC"/>
<dbReference type="OrthoDB" id="191686at2759"/>
<dbReference type="PhylomeDB" id="P79880"/>
<dbReference type="TreeFam" id="TF333971"/>
<dbReference type="Reactome" id="R-GGA-2514859">
    <property type="pathway name" value="Inactivation, recovery and regulation of the phototransduction cascade"/>
</dbReference>
<dbReference type="EvolutionaryTrace" id="P79880"/>
<dbReference type="PRO" id="PR:P79880"/>
<dbReference type="Proteomes" id="UP000000539">
    <property type="component" value="Chromosome 26"/>
</dbReference>
<dbReference type="Bgee" id="ENSGALG00000001431">
    <property type="expression patterns" value="Expressed in liver and 1 other cell type or tissue"/>
</dbReference>
<dbReference type="GO" id="GO:0120199">
    <property type="term" value="C:cone photoreceptor outer segment"/>
    <property type="evidence" value="ECO:0000318"/>
    <property type="project" value="GO_Central"/>
</dbReference>
<dbReference type="GO" id="GO:0001917">
    <property type="term" value="C:photoreceptor inner segment"/>
    <property type="evidence" value="ECO:0000318"/>
    <property type="project" value="GO_Central"/>
</dbReference>
<dbReference type="GO" id="GO:0005509">
    <property type="term" value="F:calcium ion binding"/>
    <property type="evidence" value="ECO:0000250"/>
    <property type="project" value="UniProtKB"/>
</dbReference>
<dbReference type="GO" id="GO:0008048">
    <property type="term" value="F:calcium sensitive guanylate cyclase activator activity"/>
    <property type="evidence" value="ECO:0000250"/>
    <property type="project" value="UniProtKB"/>
</dbReference>
<dbReference type="GO" id="GO:0030249">
    <property type="term" value="F:guanylate cyclase regulator activity"/>
    <property type="evidence" value="ECO:0000250"/>
    <property type="project" value="UniProtKB"/>
</dbReference>
<dbReference type="GO" id="GO:0071277">
    <property type="term" value="P:cellular response to calcium ion"/>
    <property type="evidence" value="ECO:0000250"/>
    <property type="project" value="UniProtKB"/>
</dbReference>
<dbReference type="GO" id="GO:0007602">
    <property type="term" value="P:phototransduction"/>
    <property type="evidence" value="ECO:0007669"/>
    <property type="project" value="Ensembl"/>
</dbReference>
<dbReference type="GO" id="GO:0031284">
    <property type="term" value="P:positive regulation of guanylate cyclase activity"/>
    <property type="evidence" value="ECO:0000250"/>
    <property type="project" value="UniProtKB"/>
</dbReference>
<dbReference type="GO" id="GO:0009966">
    <property type="term" value="P:regulation of signal transduction"/>
    <property type="evidence" value="ECO:0000318"/>
    <property type="project" value="GO_Central"/>
</dbReference>
<dbReference type="GO" id="GO:0007601">
    <property type="term" value="P:visual perception"/>
    <property type="evidence" value="ECO:0000318"/>
    <property type="project" value="GO_Central"/>
</dbReference>
<dbReference type="CDD" id="cd00051">
    <property type="entry name" value="EFh"/>
    <property type="match status" value="2"/>
</dbReference>
<dbReference type="FunFam" id="1.10.238.10:FF:000052">
    <property type="entry name" value="Guanylate cyclase activator 1A"/>
    <property type="match status" value="1"/>
</dbReference>
<dbReference type="Gene3D" id="1.10.238.10">
    <property type="entry name" value="EF-hand"/>
    <property type="match status" value="2"/>
</dbReference>
<dbReference type="InterPro" id="IPR011992">
    <property type="entry name" value="EF-hand-dom_pair"/>
</dbReference>
<dbReference type="InterPro" id="IPR018247">
    <property type="entry name" value="EF_Hand_1_Ca_BS"/>
</dbReference>
<dbReference type="InterPro" id="IPR002048">
    <property type="entry name" value="EF_hand_dom"/>
</dbReference>
<dbReference type="InterPro" id="IPR028846">
    <property type="entry name" value="Recoverin"/>
</dbReference>
<dbReference type="PANTHER" id="PTHR23055">
    <property type="entry name" value="CALCIUM BINDING PROTEINS"/>
    <property type="match status" value="1"/>
</dbReference>
<dbReference type="PANTHER" id="PTHR23055:SF13">
    <property type="entry name" value="GUANYLYL CYCLASE-ACTIVATING PROTEIN 1"/>
    <property type="match status" value="1"/>
</dbReference>
<dbReference type="Pfam" id="PF00036">
    <property type="entry name" value="EF-hand_1"/>
    <property type="match status" value="1"/>
</dbReference>
<dbReference type="Pfam" id="PF13499">
    <property type="entry name" value="EF-hand_7"/>
    <property type="match status" value="1"/>
</dbReference>
<dbReference type="PRINTS" id="PR00450">
    <property type="entry name" value="RECOVERIN"/>
</dbReference>
<dbReference type="SMART" id="SM00054">
    <property type="entry name" value="EFh"/>
    <property type="match status" value="3"/>
</dbReference>
<dbReference type="SUPFAM" id="SSF47473">
    <property type="entry name" value="EF-hand"/>
    <property type="match status" value="1"/>
</dbReference>
<dbReference type="PROSITE" id="PS00018">
    <property type="entry name" value="EF_HAND_1"/>
    <property type="match status" value="3"/>
</dbReference>
<dbReference type="PROSITE" id="PS50222">
    <property type="entry name" value="EF_HAND_2"/>
    <property type="match status" value="4"/>
</dbReference>
<evidence type="ECO:0000250" key="1">
    <source>
        <dbReference type="UniProtKB" id="P46065"/>
    </source>
</evidence>
<evidence type="ECO:0000255" key="2"/>
<evidence type="ECO:0000255" key="3">
    <source>
        <dbReference type="PROSITE-ProRule" id="PRU00448"/>
    </source>
</evidence>
<evidence type="ECO:0000269" key="4">
    <source>
    </source>
</evidence>
<evidence type="ECO:0007829" key="5">
    <source>
        <dbReference type="PDB" id="2R2I"/>
    </source>
</evidence>
<name>GUC1A_CHICK</name>
<proteinExistence type="evidence at protein level"/>
<organism>
    <name type="scientific">Gallus gallus</name>
    <name type="common">Chicken</name>
    <dbReference type="NCBI Taxonomy" id="9031"/>
    <lineage>
        <taxon>Eukaryota</taxon>
        <taxon>Metazoa</taxon>
        <taxon>Chordata</taxon>
        <taxon>Craniata</taxon>
        <taxon>Vertebrata</taxon>
        <taxon>Euteleostomi</taxon>
        <taxon>Archelosauria</taxon>
        <taxon>Archosauria</taxon>
        <taxon>Dinosauria</taxon>
        <taxon>Saurischia</taxon>
        <taxon>Theropoda</taxon>
        <taxon>Coelurosauria</taxon>
        <taxon>Aves</taxon>
        <taxon>Neognathae</taxon>
        <taxon>Galloanserae</taxon>
        <taxon>Galliformes</taxon>
        <taxon>Phasianidae</taxon>
        <taxon>Phasianinae</taxon>
        <taxon>Gallus</taxon>
    </lineage>
</organism>
<feature type="initiator methionine" description="Removed">
    <location>
        <position position="1"/>
    </location>
</feature>
<feature type="chain" id="PRO_0000073805" description="Guanylyl cyclase-activating protein 1">
    <location>
        <begin position="2"/>
        <end position="199"/>
    </location>
</feature>
<feature type="domain" description="EF-hand 1" evidence="3">
    <location>
        <begin position="13"/>
        <end position="48"/>
    </location>
</feature>
<feature type="domain" description="EF-hand 2" evidence="3">
    <location>
        <begin position="50"/>
        <end position="85"/>
    </location>
</feature>
<feature type="domain" description="EF-hand 3" evidence="3">
    <location>
        <begin position="86"/>
        <end position="121"/>
    </location>
</feature>
<feature type="domain" description="EF-hand 4" evidence="3">
    <location>
        <begin position="129"/>
        <end position="164"/>
    </location>
</feature>
<feature type="binding site" evidence="3 4">
    <location>
        <position position="63"/>
    </location>
    <ligand>
        <name>Ca(2+)</name>
        <dbReference type="ChEBI" id="CHEBI:29108"/>
        <label>1</label>
    </ligand>
</feature>
<feature type="binding site" evidence="3 4">
    <location>
        <position position="65"/>
    </location>
    <ligand>
        <name>Ca(2+)</name>
        <dbReference type="ChEBI" id="CHEBI:29108"/>
        <label>1</label>
    </ligand>
</feature>
<feature type="binding site" evidence="3 4">
    <location>
        <position position="67"/>
    </location>
    <ligand>
        <name>Ca(2+)</name>
        <dbReference type="ChEBI" id="CHEBI:29108"/>
        <label>1</label>
    </ligand>
</feature>
<feature type="binding site" evidence="3 4">
    <location>
        <position position="69"/>
    </location>
    <ligand>
        <name>Ca(2+)</name>
        <dbReference type="ChEBI" id="CHEBI:29108"/>
        <label>1</label>
    </ligand>
</feature>
<feature type="binding site" evidence="3 4">
    <location>
        <position position="74"/>
    </location>
    <ligand>
        <name>Ca(2+)</name>
        <dbReference type="ChEBI" id="CHEBI:29108"/>
        <label>1</label>
    </ligand>
</feature>
<feature type="binding site" evidence="3 4">
    <location>
        <position position="99"/>
    </location>
    <ligand>
        <name>Ca(2+)</name>
        <dbReference type="ChEBI" id="CHEBI:29108"/>
        <label>2</label>
    </ligand>
</feature>
<feature type="binding site" evidence="3 4">
    <location>
        <position position="101"/>
    </location>
    <ligand>
        <name>Ca(2+)</name>
        <dbReference type="ChEBI" id="CHEBI:29108"/>
        <label>2</label>
    </ligand>
</feature>
<feature type="binding site" evidence="3 4">
    <location>
        <position position="103"/>
    </location>
    <ligand>
        <name>Ca(2+)</name>
        <dbReference type="ChEBI" id="CHEBI:29108"/>
        <label>2</label>
    </ligand>
</feature>
<feature type="binding site" evidence="3 4">
    <location>
        <position position="105"/>
    </location>
    <ligand>
        <name>Ca(2+)</name>
        <dbReference type="ChEBI" id="CHEBI:29108"/>
        <label>2</label>
    </ligand>
</feature>
<feature type="binding site" evidence="3 4">
    <location>
        <position position="110"/>
    </location>
    <ligand>
        <name>Ca(2+)</name>
        <dbReference type="ChEBI" id="CHEBI:29108"/>
        <label>2</label>
    </ligand>
</feature>
<feature type="binding site" evidence="3 4">
    <location>
        <position position="142"/>
    </location>
    <ligand>
        <name>Ca(2+)</name>
        <dbReference type="ChEBI" id="CHEBI:29108"/>
        <label>3</label>
    </ligand>
</feature>
<feature type="binding site" evidence="3 4">
    <location>
        <position position="144"/>
    </location>
    <ligand>
        <name>Ca(2+)</name>
        <dbReference type="ChEBI" id="CHEBI:29108"/>
        <label>3</label>
    </ligand>
</feature>
<feature type="binding site" evidence="3 4">
    <location>
        <position position="146"/>
    </location>
    <ligand>
        <name>Ca(2+)</name>
        <dbReference type="ChEBI" id="CHEBI:29108"/>
        <label>3</label>
    </ligand>
</feature>
<feature type="binding site" evidence="3 4">
    <location>
        <position position="148"/>
    </location>
    <ligand>
        <name>Ca(2+)</name>
        <dbReference type="ChEBI" id="CHEBI:29108"/>
        <label>3</label>
    </ligand>
</feature>
<feature type="binding site" evidence="3 4">
    <location>
        <position position="153"/>
    </location>
    <ligand>
        <name>Ca(2+)</name>
        <dbReference type="ChEBI" id="CHEBI:29108"/>
        <label>3</label>
    </ligand>
</feature>
<feature type="modified residue" description="Deamidated asparagine" evidence="2">
    <location>
        <position position="3"/>
    </location>
</feature>
<feature type="lipid moiety-binding region" description="N-myristoyl glycine" evidence="4">
    <location>
        <position position="2"/>
    </location>
</feature>
<feature type="helix" evidence="5">
    <location>
        <begin position="6"/>
        <end position="13"/>
    </location>
</feature>
<feature type="helix" evidence="5">
    <location>
        <begin position="17"/>
        <end position="27"/>
    </location>
</feature>
<feature type="strand" evidence="5">
    <location>
        <begin position="31"/>
        <end position="33"/>
    </location>
</feature>
<feature type="helix" evidence="5">
    <location>
        <begin position="35"/>
        <end position="42"/>
    </location>
</feature>
<feature type="helix" evidence="5">
    <location>
        <begin position="49"/>
        <end position="62"/>
    </location>
</feature>
<feature type="helix" evidence="5">
    <location>
        <begin position="72"/>
        <end position="82"/>
    </location>
</feature>
<feature type="helix" evidence="5">
    <location>
        <begin position="87"/>
        <end position="98"/>
    </location>
</feature>
<feature type="helix" evidence="5">
    <location>
        <begin position="108"/>
        <end position="117"/>
    </location>
</feature>
<feature type="helix" evidence="5">
    <location>
        <begin position="120"/>
        <end position="123"/>
    </location>
</feature>
<feature type="strand" evidence="5">
    <location>
        <begin position="124"/>
        <end position="126"/>
    </location>
</feature>
<feature type="helix" evidence="5">
    <location>
        <begin position="130"/>
        <end position="141"/>
    </location>
</feature>
<feature type="strand" evidence="5">
    <location>
        <begin position="146"/>
        <end position="149"/>
    </location>
</feature>
<feature type="helix" evidence="5">
    <location>
        <begin position="151"/>
        <end position="158"/>
    </location>
</feature>
<feature type="helix" evidence="5">
    <location>
        <begin position="162"/>
        <end position="169"/>
    </location>
</feature>
<feature type="helix" evidence="5">
    <location>
        <begin position="174"/>
        <end position="181"/>
    </location>
</feature>
<sequence length="199" mass="22808">MGNMDGKAVEELSATECHQWYKKFMTECPSGQLTLYEFKQFFGLKNLSPSANKYVEQMFETFDFNKDGYIDFMEYVAALSLVLKGKVDQKLRWYFKLYDVDGNGCIDRGELLNIIKAIRAINRCNEAMTAEEFTNMVFDKIDINGDGELSLEEFMEGVQKDEVLLDILTRSLDLTHIVKLIQNDGKNPHAPEEAEEAAQ</sequence>
<comment type="function">
    <text evidence="1">Stimulates retinal guanylyl cyclase when free calcium ions concentration is low and inhibits guanylyl cyclase when free calcium ions concentration is elevated. This Ca(2+)-sensitive regulation of retinal guanylyl cyclase is a key event in recovery of the dark state of rod photoreceptors following light exposure.</text>
</comment>
<comment type="tissue specificity">
    <text>Retina, in rod and cone outer segments, and pineal gland.</text>
</comment>
<comment type="domain">
    <text evidence="1 4">Binds three calcium ions (via EF-hands 2, 3 and 4) when calcium levels are high (PubMed:17997965). Binds Mg(2+) when calcium levels are low.</text>
</comment>
<reference key="1">
    <citation type="journal article" date="1996" name="FEBS Lett.">
        <title>Expression of GCAP1 and GCAP2 in the retinal degeneration (rd) mutant chicken retina.</title>
        <authorList>
            <person name="Semple-Rowland S.L."/>
            <person name="Gorczyca W.A."/>
            <person name="Buczylko J."/>
            <person name="Helekar B.S."/>
            <person name="Ruiz C.C."/>
            <person name="Subbaraya I."/>
            <person name="Palczewski K."/>
            <person name="Baehr W."/>
        </authorList>
    </citation>
    <scope>NUCLEOTIDE SEQUENCE [MRNA]</scope>
    <source>
        <tissue>Retina</tissue>
    </source>
</reference>
<reference key="2">
    <citation type="journal article" date="1999" name="Mol. Vis.">
        <title>Characterization of the chicken GCAP gene array and analyses of GCAP1, GCAP2, and GC1 gene expression in normal and rd chicken pineal.</title>
        <authorList>
            <person name="Semple-Rowland S.L."/>
            <person name="Larkin P."/>
            <person name="Bronson J.D."/>
            <person name="Nykamp K."/>
            <person name="Streit W.J."/>
            <person name="Baehr W."/>
        </authorList>
    </citation>
    <scope>NUCLEOTIDE SEQUENCE [GENOMIC DNA]</scope>
    <source>
        <strain>White leghorn</strain>
        <tissue>Liver</tissue>
    </source>
</reference>
<reference key="3">
    <citation type="journal article" date="2007" name="Structure">
        <title>Stabilizing function for myristoyl group revealed by the crystal structure of a neuronal calcium sensor, guanylate cyclase-activating protein 1.</title>
        <authorList>
            <person name="Stephen R."/>
            <person name="Bereta G."/>
            <person name="Golczak M."/>
            <person name="Palczewski K."/>
            <person name="Sousa M.C."/>
        </authorList>
    </citation>
    <scope>X-RAY CRYSTALLOGRAPHY (2.0 ANGSTROMS) OF 2-199</scope>
    <scope>CALCIUM-BINDING</scope>
    <scope>MYRISTOYLATION AT GLY-2</scope>
    <scope>DOMAIN</scope>
</reference>
<keyword id="KW-0002">3D-structure</keyword>
<keyword id="KW-0106">Calcium</keyword>
<keyword id="KW-0449">Lipoprotein</keyword>
<keyword id="KW-0479">Metal-binding</keyword>
<keyword id="KW-0519">Myristate</keyword>
<keyword id="KW-1185">Reference proteome</keyword>
<keyword id="KW-0677">Repeat</keyword>
<keyword id="KW-0716">Sensory transduction</keyword>
<keyword id="KW-0844">Vision</keyword>